<keyword id="KW-0143">Chaperone</keyword>
<keyword id="KW-0963">Cytoplasm</keyword>
<name>TORD_COLP3</name>
<accession>Q484F1</accession>
<dbReference type="EMBL" id="CP000083">
    <property type="protein sequence ID" value="AAZ24720.1"/>
    <property type="molecule type" value="Genomic_DNA"/>
</dbReference>
<dbReference type="RefSeq" id="WP_011042658.1">
    <property type="nucleotide sequence ID" value="NC_003910.7"/>
</dbReference>
<dbReference type="SMR" id="Q484F1"/>
<dbReference type="STRING" id="167879.CPS_1834"/>
<dbReference type="KEGG" id="cps:CPS_1834"/>
<dbReference type="HOGENOM" id="CLU_077650_4_0_6"/>
<dbReference type="Proteomes" id="UP000000547">
    <property type="component" value="Chromosome"/>
</dbReference>
<dbReference type="GO" id="GO:0005737">
    <property type="term" value="C:cytoplasm"/>
    <property type="evidence" value="ECO:0007669"/>
    <property type="project" value="UniProtKB-SubCell"/>
</dbReference>
<dbReference type="GO" id="GO:0051259">
    <property type="term" value="P:protein complex oligomerization"/>
    <property type="evidence" value="ECO:0007669"/>
    <property type="project" value="InterPro"/>
</dbReference>
<dbReference type="GO" id="GO:0006457">
    <property type="term" value="P:protein folding"/>
    <property type="evidence" value="ECO:0007669"/>
    <property type="project" value="UniProtKB-UniRule"/>
</dbReference>
<dbReference type="Gene3D" id="1.20.120.1820">
    <property type="match status" value="1"/>
</dbReference>
<dbReference type="Gene3D" id="1.20.1280.20">
    <property type="entry name" value="HscB, C-terminal domain"/>
    <property type="match status" value="1"/>
</dbReference>
<dbReference type="HAMAP" id="MF_01150">
    <property type="entry name" value="TorD"/>
    <property type="match status" value="1"/>
</dbReference>
<dbReference type="InterPro" id="IPR023069">
    <property type="entry name" value="Chaperone_TorD"/>
</dbReference>
<dbReference type="InterPro" id="IPR020945">
    <property type="entry name" value="DMSO/NO3_reduct_chaperone"/>
</dbReference>
<dbReference type="InterPro" id="IPR036386">
    <property type="entry name" value="HscB_C_sf"/>
</dbReference>
<dbReference type="InterPro" id="IPR036411">
    <property type="entry name" value="TorD-like_sf"/>
</dbReference>
<dbReference type="InterPro" id="IPR050289">
    <property type="entry name" value="TorD/DmsD_chaperones"/>
</dbReference>
<dbReference type="NCBIfam" id="NF003442">
    <property type="entry name" value="PRK04976.1"/>
    <property type="match status" value="1"/>
</dbReference>
<dbReference type="PANTHER" id="PTHR34227:SF11">
    <property type="entry name" value="CHAPERONE PROTEIN TORD"/>
    <property type="match status" value="1"/>
</dbReference>
<dbReference type="PANTHER" id="PTHR34227">
    <property type="entry name" value="CHAPERONE PROTEIN YCDY"/>
    <property type="match status" value="1"/>
</dbReference>
<dbReference type="Pfam" id="PF02613">
    <property type="entry name" value="Nitrate_red_del"/>
    <property type="match status" value="1"/>
</dbReference>
<dbReference type="SUPFAM" id="SSF89155">
    <property type="entry name" value="TorD-like"/>
    <property type="match status" value="1"/>
</dbReference>
<protein>
    <recommendedName>
        <fullName evidence="1">Chaperone protein TorD</fullName>
    </recommendedName>
</protein>
<sequence>MSHVSQETAQEISEEREARAIVYNFLSSLFAKEVTSDLVAQLTSAQGQSFLKSLALDPSLSASVNEINTKLVKLNSKESLLELAADFCGLFLVDGRTSVSPYAGQYLSVEQGGEPSEKLSNAAINESGSKSKKNKAQLFGELHQQMTEFLTDNKLQIHSDFPEPGDHIAVILAYIAHLCVTSGSEQQLNFINSYLMTWLSDFTQQVNKHDHGQFYCFVADLTFEWLKVDTEFLLSD</sequence>
<feature type="chain" id="PRO_0000414893" description="Chaperone protein TorD">
    <location>
        <begin position="1"/>
        <end position="236"/>
    </location>
</feature>
<comment type="function">
    <text evidence="1">Involved in the biogenesis of TorA. Acts on TorA before the insertion of the molybdenum cofactor and, as a result, probably favors a conformation of the apoenzyme that is competent for acquiring the cofactor.</text>
</comment>
<comment type="subcellular location">
    <subcellularLocation>
        <location evidence="1">Cytoplasm</location>
    </subcellularLocation>
</comment>
<comment type="similarity">
    <text evidence="1">Belongs to the TorD/DmsD family. TorD subfamily.</text>
</comment>
<gene>
    <name evidence="1" type="primary">torD</name>
    <name type="ordered locus">CPS_1834</name>
</gene>
<proteinExistence type="inferred from homology"/>
<organism>
    <name type="scientific">Colwellia psychrerythraea (strain 34H / ATCC BAA-681)</name>
    <name type="common">Vibrio psychroerythus</name>
    <dbReference type="NCBI Taxonomy" id="167879"/>
    <lineage>
        <taxon>Bacteria</taxon>
        <taxon>Pseudomonadati</taxon>
        <taxon>Pseudomonadota</taxon>
        <taxon>Gammaproteobacteria</taxon>
        <taxon>Alteromonadales</taxon>
        <taxon>Colwelliaceae</taxon>
        <taxon>Colwellia</taxon>
    </lineage>
</organism>
<reference key="1">
    <citation type="journal article" date="2005" name="Proc. Natl. Acad. Sci. U.S.A.">
        <title>The psychrophilic lifestyle as revealed by the genome sequence of Colwellia psychrerythraea 34H through genomic and proteomic analyses.</title>
        <authorList>
            <person name="Methe B.A."/>
            <person name="Nelson K.E."/>
            <person name="Deming J.W."/>
            <person name="Momen B."/>
            <person name="Melamud E."/>
            <person name="Zhang X."/>
            <person name="Moult J."/>
            <person name="Madupu R."/>
            <person name="Nelson W.C."/>
            <person name="Dodson R.J."/>
            <person name="Brinkac L.M."/>
            <person name="Daugherty S.C."/>
            <person name="Durkin A.S."/>
            <person name="DeBoy R.T."/>
            <person name="Kolonay J.F."/>
            <person name="Sullivan S.A."/>
            <person name="Zhou L."/>
            <person name="Davidsen T.M."/>
            <person name="Wu M."/>
            <person name="Huston A.L."/>
            <person name="Lewis M."/>
            <person name="Weaver B."/>
            <person name="Weidman J.F."/>
            <person name="Khouri H."/>
            <person name="Utterback T.R."/>
            <person name="Feldblyum T.V."/>
            <person name="Fraser C.M."/>
        </authorList>
    </citation>
    <scope>NUCLEOTIDE SEQUENCE [LARGE SCALE GENOMIC DNA]</scope>
    <source>
        <strain>34H / ATCC BAA-681</strain>
    </source>
</reference>
<evidence type="ECO:0000255" key="1">
    <source>
        <dbReference type="HAMAP-Rule" id="MF_01150"/>
    </source>
</evidence>